<feature type="chain" id="PRO_0000262566" description="Thymocyte nuclear protein 1">
    <location>
        <begin position="1"/>
        <end position="226"/>
    </location>
</feature>
<feature type="region of interest" description="Disordered" evidence="2">
    <location>
        <begin position="1"/>
        <end position="38"/>
    </location>
</feature>
<feature type="short sequence motif" description="Nuclear localization signal" evidence="1">
    <location>
        <begin position="5"/>
        <end position="10"/>
    </location>
</feature>
<feature type="compositionally biased region" description="Basic and acidic residues" evidence="2">
    <location>
        <begin position="14"/>
        <end position="28"/>
    </location>
</feature>
<feature type="compositionally biased region" description="Polar residues" evidence="2">
    <location>
        <begin position="29"/>
        <end position="38"/>
    </location>
</feature>
<gene>
    <name type="primary">Thyn1</name>
</gene>
<protein>
    <recommendedName>
        <fullName>Thymocyte nuclear protein 1</fullName>
    </recommendedName>
</protein>
<reference key="1">
    <citation type="journal article" date="2004" name="Genome Res.">
        <title>The status, quality, and expansion of the NIH full-length cDNA project: the Mammalian Gene Collection (MGC).</title>
        <authorList>
            <consortium name="The MGC Project Team"/>
        </authorList>
    </citation>
    <scope>NUCLEOTIDE SEQUENCE [LARGE SCALE MRNA]</scope>
    <source>
        <tissue>Pituitary</tissue>
    </source>
</reference>
<dbReference type="EMBL" id="BC064031">
    <property type="protein sequence ID" value="AAH64031.1"/>
    <property type="molecule type" value="mRNA"/>
</dbReference>
<dbReference type="RefSeq" id="NP_001007662.1">
    <property type="nucleotide sequence ID" value="NM_001007661.3"/>
</dbReference>
<dbReference type="RefSeq" id="XP_063121142.1">
    <property type="nucleotide sequence ID" value="XM_063265072.1"/>
</dbReference>
<dbReference type="SMR" id="Q6P3E0"/>
<dbReference type="FunCoup" id="Q6P3E0">
    <property type="interactions" value="2133"/>
</dbReference>
<dbReference type="STRING" id="10116.ENSRNOP00000073866"/>
<dbReference type="PhosphoSitePlus" id="Q6P3E0"/>
<dbReference type="PaxDb" id="10116-ENSRNOP00000067377"/>
<dbReference type="GeneID" id="300470"/>
<dbReference type="KEGG" id="rno:300470"/>
<dbReference type="AGR" id="RGD:1359525"/>
<dbReference type="CTD" id="29087"/>
<dbReference type="RGD" id="1359525">
    <property type="gene designation" value="Thyn1"/>
</dbReference>
<dbReference type="VEuPathDB" id="HostDB:ENSRNOG00000047053"/>
<dbReference type="eggNOG" id="KOG3383">
    <property type="taxonomic scope" value="Eukaryota"/>
</dbReference>
<dbReference type="HOGENOM" id="CLU_041799_2_0_1"/>
<dbReference type="InParanoid" id="Q6P3E0"/>
<dbReference type="OrthoDB" id="56975at9989"/>
<dbReference type="PhylomeDB" id="Q6P3E0"/>
<dbReference type="PRO" id="PR:Q6P3E0"/>
<dbReference type="Proteomes" id="UP000002494">
    <property type="component" value="Chromosome 8"/>
</dbReference>
<dbReference type="Bgee" id="ENSRNOG00000047053">
    <property type="expression patterns" value="Expressed in ovary and 19 other cell types or tissues"/>
</dbReference>
<dbReference type="GO" id="GO:0005634">
    <property type="term" value="C:nucleus"/>
    <property type="evidence" value="ECO:0000266"/>
    <property type="project" value="RGD"/>
</dbReference>
<dbReference type="CDD" id="cd21133">
    <property type="entry name" value="EVE"/>
    <property type="match status" value="1"/>
</dbReference>
<dbReference type="FunFam" id="3.10.590.10:FF:000003">
    <property type="entry name" value="Thymocyte nuclear protein 1"/>
    <property type="match status" value="1"/>
</dbReference>
<dbReference type="Gene3D" id="3.10.590.10">
    <property type="entry name" value="ph1033 like domains"/>
    <property type="match status" value="1"/>
</dbReference>
<dbReference type="InterPro" id="IPR052181">
    <property type="entry name" value="5hmC_binding"/>
</dbReference>
<dbReference type="InterPro" id="IPR002740">
    <property type="entry name" value="EVE_domain"/>
</dbReference>
<dbReference type="InterPro" id="IPR015947">
    <property type="entry name" value="PUA-like_sf"/>
</dbReference>
<dbReference type="InterPro" id="IPR047197">
    <property type="entry name" value="THYN1-like_EVE"/>
</dbReference>
<dbReference type="PANTHER" id="PTHR14087">
    <property type="entry name" value="THYMOCYTE NUCLEAR PROTEIN 1"/>
    <property type="match status" value="1"/>
</dbReference>
<dbReference type="PANTHER" id="PTHR14087:SF7">
    <property type="entry name" value="THYMOCYTE NUCLEAR PROTEIN 1"/>
    <property type="match status" value="1"/>
</dbReference>
<dbReference type="Pfam" id="PF01878">
    <property type="entry name" value="EVE"/>
    <property type="match status" value="1"/>
</dbReference>
<dbReference type="SUPFAM" id="SSF88697">
    <property type="entry name" value="PUA domain-like"/>
    <property type="match status" value="1"/>
</dbReference>
<name>THYN1_RAT</name>
<accession>Q6P3E0</accession>
<organism>
    <name type="scientific">Rattus norvegicus</name>
    <name type="common">Rat</name>
    <dbReference type="NCBI Taxonomy" id="10116"/>
    <lineage>
        <taxon>Eukaryota</taxon>
        <taxon>Metazoa</taxon>
        <taxon>Chordata</taxon>
        <taxon>Craniata</taxon>
        <taxon>Vertebrata</taxon>
        <taxon>Euteleostomi</taxon>
        <taxon>Mammalia</taxon>
        <taxon>Eutheria</taxon>
        <taxon>Euarchontoglires</taxon>
        <taxon>Glires</taxon>
        <taxon>Rodentia</taxon>
        <taxon>Myomorpha</taxon>
        <taxon>Muroidea</taxon>
        <taxon>Muridae</taxon>
        <taxon>Murinae</taxon>
        <taxon>Rattus</taxon>
    </lineage>
</organism>
<evidence type="ECO:0000250" key="1"/>
<evidence type="ECO:0000256" key="2">
    <source>
        <dbReference type="SAM" id="MobiDB-lite"/>
    </source>
</evidence>
<proteinExistence type="evidence at transcript level"/>
<keyword id="KW-0539">Nucleus</keyword>
<keyword id="KW-0597">Phosphoprotein</keyword>
<keyword id="KW-1185">Reference proteome</keyword>
<comment type="function">
    <text evidence="1">Specifically binds 5-hydroxymethylcytosine (5hmC), suggesting that it acts as a specific reader of 5hmC.</text>
</comment>
<comment type="subcellular location">
    <subcellularLocation>
        <location evidence="1">Nucleus</location>
    </subcellularLocation>
</comment>
<comment type="PTM">
    <text evidence="1">Phosphorylated.</text>
</comment>
<sequence length="226" mass="26123">MPRPRKRQAGAAGPDKKQLSGKRTKTENSESASVKLENSSLEKTTTFKTCGKNLSNYWLMKSEPESRLEKGIDMKFSIEDLQAQPKQTTCWDGVRNYQAWNFLRAMKLEDEAFFYHSNCKQPGIVGLMKIVKEAYPDHTQFEKNDPHYDPSSKEDNPKWSMVDVQFVRMMKRFISLDELKTYHQAHKATGGPLKSMTLFTRQRLSVQPLTQEEFDFILSLEEAEPS</sequence>